<gene>
    <name type="primary">NUDT16</name>
    <name type="synonym">NUDX16</name>
    <name type="ordered locus">At3g12600</name>
    <name type="ORF">T2E22.9</name>
</gene>
<name>NUD16_ARATH</name>
<evidence type="ECO:0000250" key="1"/>
<evidence type="ECO:0000250" key="2">
    <source>
        <dbReference type="UniProtKB" id="Q6TEC1"/>
    </source>
</evidence>
<evidence type="ECO:0000250" key="3">
    <source>
        <dbReference type="UniProtKB" id="Q96DE0"/>
    </source>
</evidence>
<evidence type="ECO:0000255" key="4">
    <source>
        <dbReference type="PROSITE-ProRule" id="PRU00794"/>
    </source>
</evidence>
<evidence type="ECO:0000269" key="5">
    <source>
    </source>
</evidence>
<evidence type="ECO:0000305" key="6"/>
<accession>Q9LHK1</accession>
<accession>A8MR20</accession>
<comment type="function">
    <text evidence="1">Probably mediates the hydrolysis of some nucleoside diphosphate derivatives.</text>
</comment>
<comment type="cofactor">
    <cofactor evidence="1">
        <name>Mg(2+)</name>
        <dbReference type="ChEBI" id="CHEBI:18420"/>
    </cofactor>
    <cofactor evidence="1">
        <name>Mn(2+)</name>
        <dbReference type="ChEBI" id="CHEBI:29035"/>
    </cofactor>
</comment>
<comment type="subcellular location">
    <subcellularLocation>
        <location evidence="6">Mitochondrion</location>
    </subcellularLocation>
</comment>
<comment type="alternative products">
    <event type="alternative splicing"/>
    <isoform>
        <id>Q9LHK1-1</id>
        <name>1</name>
        <sequence type="displayed"/>
    </isoform>
    <isoform>
        <id>Q9LHK1-2</id>
        <name>2</name>
        <sequence type="described" ref="VSP_037561"/>
    </isoform>
</comment>
<comment type="tissue specificity">
    <text evidence="5">Expressed in roots, leaves, stems and inflorescences.</text>
</comment>
<comment type="similarity">
    <text evidence="6">Belongs to the Nudix hydrolase family.</text>
</comment>
<keyword id="KW-0025">Alternative splicing</keyword>
<keyword id="KW-0378">Hydrolase</keyword>
<keyword id="KW-0460">Magnesium</keyword>
<keyword id="KW-0464">Manganese</keyword>
<keyword id="KW-0479">Metal-binding</keyword>
<keyword id="KW-0496">Mitochondrion</keyword>
<keyword id="KW-1185">Reference proteome</keyword>
<keyword id="KW-0809">Transit peptide</keyword>
<feature type="transit peptide" description="Mitochondrion">
    <location>
        <begin position="1"/>
        <end status="unknown"/>
    </location>
</feature>
<feature type="chain" id="PRO_0000019959" description="Nudix hydrolase 16, mitochondrial">
    <location>
        <begin status="unknown"/>
        <end position="180"/>
    </location>
</feature>
<feature type="domain" description="Nudix hydrolase" evidence="4">
    <location>
        <begin position="18"/>
        <end position="162"/>
    </location>
</feature>
<feature type="short sequence motif" description="Nudix box">
    <location>
        <begin position="63"/>
        <end position="84"/>
    </location>
</feature>
<feature type="binding site" evidence="3">
    <location>
        <position position="60"/>
    </location>
    <ligand>
        <name>substrate</name>
    </ligand>
</feature>
<feature type="binding site" evidence="2">
    <location>
        <position position="63"/>
    </location>
    <ligand>
        <name>Mn(2+)</name>
        <dbReference type="ChEBI" id="CHEBI:29035"/>
        <label>1</label>
    </ligand>
</feature>
<feature type="binding site" evidence="2">
    <location>
        <position position="78"/>
    </location>
    <ligand>
        <name>Mn(2+)</name>
        <dbReference type="ChEBI" id="CHEBI:29035"/>
        <label>2</label>
    </ligand>
</feature>
<feature type="binding site" evidence="2">
    <location>
        <position position="78"/>
    </location>
    <ligand>
        <name>Mn(2+)</name>
        <dbReference type="ChEBI" id="CHEBI:29035"/>
        <label>3</label>
    </ligand>
</feature>
<feature type="binding site" evidence="2">
    <location>
        <position position="82"/>
    </location>
    <ligand>
        <name>Mn(2+)</name>
        <dbReference type="ChEBI" id="CHEBI:29035"/>
        <label>1</label>
    </ligand>
</feature>
<feature type="binding site" evidence="2">
    <location>
        <position position="82"/>
    </location>
    <ligand>
        <name>Mn(2+)</name>
        <dbReference type="ChEBI" id="CHEBI:29035"/>
        <label>3</label>
    </ligand>
</feature>
<feature type="binding site" evidence="2">
    <location>
        <position position="144"/>
    </location>
    <ligand>
        <name>Mn(2+)</name>
        <dbReference type="ChEBI" id="CHEBI:29035"/>
        <label>3</label>
    </ligand>
</feature>
<feature type="binding site" evidence="2">
    <location>
        <position position="144"/>
    </location>
    <ligand>
        <name>Mn(2+)</name>
        <dbReference type="ChEBI" id="CHEBI:29035"/>
        <label>4</label>
    </ligand>
</feature>
<feature type="splice variant" id="VSP_037561" description="In isoform 2." evidence="6">
    <original>MCDLVARTGRLQ</original>
    <variation>MVE</variation>
    <location>
        <begin position="1"/>
        <end position="12"/>
    </location>
</feature>
<proteinExistence type="evidence at transcript level"/>
<dbReference type="EC" id="3.6.1.-"/>
<dbReference type="EMBL" id="AP002044">
    <property type="protein sequence ID" value="BAB02251.1"/>
    <property type="molecule type" value="Genomic_DNA"/>
</dbReference>
<dbReference type="EMBL" id="AC069474">
    <property type="protein sequence ID" value="AAG51020.1"/>
    <property type="molecule type" value="Genomic_DNA"/>
</dbReference>
<dbReference type="EMBL" id="CP002686">
    <property type="protein sequence ID" value="AEE75221.1"/>
    <property type="molecule type" value="Genomic_DNA"/>
</dbReference>
<dbReference type="EMBL" id="CP002686">
    <property type="protein sequence ID" value="AEE75222.1"/>
    <property type="molecule type" value="Genomic_DNA"/>
</dbReference>
<dbReference type="EMBL" id="AF325001">
    <property type="protein sequence ID" value="AAG40353.1"/>
    <property type="molecule type" value="mRNA"/>
</dbReference>
<dbReference type="EMBL" id="AF372914">
    <property type="protein sequence ID" value="AAK49630.1"/>
    <property type="molecule type" value="mRNA"/>
</dbReference>
<dbReference type="EMBL" id="BT002659">
    <property type="protein sequence ID" value="AAO11575.1"/>
    <property type="molecule type" value="mRNA"/>
</dbReference>
<dbReference type="RefSeq" id="NP_001078142.1">
    <molecule id="Q9LHK1-2"/>
    <property type="nucleotide sequence ID" value="NM_001084673.1"/>
</dbReference>
<dbReference type="RefSeq" id="NP_566428.1">
    <molecule id="Q9LHK1-1"/>
    <property type="nucleotide sequence ID" value="NM_112095.4"/>
</dbReference>
<dbReference type="SMR" id="Q9LHK1"/>
<dbReference type="FunCoup" id="Q9LHK1">
    <property type="interactions" value="1892"/>
</dbReference>
<dbReference type="STRING" id="3702.Q9LHK1"/>
<dbReference type="PaxDb" id="3702-AT3G12600.1"/>
<dbReference type="ProteomicsDB" id="250586">
    <molecule id="Q9LHK1-1"/>
</dbReference>
<dbReference type="EnsemblPlants" id="AT3G12600.1">
    <molecule id="Q9LHK1-1"/>
    <property type="protein sequence ID" value="AT3G12600.1"/>
    <property type="gene ID" value="AT3G12600"/>
</dbReference>
<dbReference type="EnsemblPlants" id="AT3G12600.2">
    <molecule id="Q9LHK1-2"/>
    <property type="protein sequence ID" value="AT3G12600.2"/>
    <property type="gene ID" value="AT3G12600"/>
</dbReference>
<dbReference type="GeneID" id="820440"/>
<dbReference type="Gramene" id="AT3G12600.1">
    <molecule id="Q9LHK1-1"/>
    <property type="protein sequence ID" value="AT3G12600.1"/>
    <property type="gene ID" value="AT3G12600"/>
</dbReference>
<dbReference type="Gramene" id="AT3G12600.2">
    <molecule id="Q9LHK1-2"/>
    <property type="protein sequence ID" value="AT3G12600.2"/>
    <property type="gene ID" value="AT3G12600"/>
</dbReference>
<dbReference type="KEGG" id="ath:AT3G12600"/>
<dbReference type="Araport" id="AT3G12600"/>
<dbReference type="TAIR" id="AT3G12600">
    <property type="gene designation" value="NUDT16"/>
</dbReference>
<dbReference type="eggNOG" id="KOG2839">
    <property type="taxonomic scope" value="Eukaryota"/>
</dbReference>
<dbReference type="HOGENOM" id="CLU_037162_5_2_1"/>
<dbReference type="InParanoid" id="Q9LHK1"/>
<dbReference type="OMA" id="WHEDKLN"/>
<dbReference type="OrthoDB" id="2011998at2759"/>
<dbReference type="PhylomeDB" id="Q9LHK1"/>
<dbReference type="BioCyc" id="ARA:AT3G12600-MONOMER"/>
<dbReference type="PRO" id="PR:Q9LHK1"/>
<dbReference type="Proteomes" id="UP000006548">
    <property type="component" value="Chromosome 3"/>
</dbReference>
<dbReference type="ExpressionAtlas" id="Q9LHK1">
    <property type="expression patterns" value="baseline and differential"/>
</dbReference>
<dbReference type="GO" id="GO:0005739">
    <property type="term" value="C:mitochondrion"/>
    <property type="evidence" value="ECO:0007669"/>
    <property type="project" value="UniProtKB-SubCell"/>
</dbReference>
<dbReference type="GO" id="GO:0046872">
    <property type="term" value="F:metal ion binding"/>
    <property type="evidence" value="ECO:0007669"/>
    <property type="project" value="UniProtKB-KW"/>
</dbReference>
<dbReference type="GO" id="GO:0016462">
    <property type="term" value="F:pyrophosphatase activity"/>
    <property type="evidence" value="ECO:0007669"/>
    <property type="project" value="InterPro"/>
</dbReference>
<dbReference type="CDD" id="cd04666">
    <property type="entry name" value="NUDIX_DIPP2_like_Nudt4"/>
    <property type="match status" value="1"/>
</dbReference>
<dbReference type="FunFam" id="3.90.79.10:FF:000031">
    <property type="entry name" value="Nudix hydrolase 16, mitochondrial"/>
    <property type="match status" value="1"/>
</dbReference>
<dbReference type="Gene3D" id="3.90.79.10">
    <property type="entry name" value="Nucleoside Triphosphate Pyrophosphohydrolase"/>
    <property type="match status" value="1"/>
</dbReference>
<dbReference type="InterPro" id="IPR047198">
    <property type="entry name" value="DDP-like_NUDIX"/>
</dbReference>
<dbReference type="InterPro" id="IPR015797">
    <property type="entry name" value="NUDIX_hydrolase-like_dom_sf"/>
</dbReference>
<dbReference type="InterPro" id="IPR020084">
    <property type="entry name" value="NUDIX_hydrolase_CS"/>
</dbReference>
<dbReference type="InterPro" id="IPR000086">
    <property type="entry name" value="NUDIX_hydrolase_dom"/>
</dbReference>
<dbReference type="PANTHER" id="PTHR12629">
    <property type="entry name" value="DIPHOSPHOINOSITOL POLYPHOSPHATE PHOSPHOHYDROLASE"/>
    <property type="match status" value="1"/>
</dbReference>
<dbReference type="PANTHER" id="PTHR12629:SF61">
    <property type="entry name" value="NUDIX HYDROLASE 16, MITOCHONDRIAL"/>
    <property type="match status" value="1"/>
</dbReference>
<dbReference type="Pfam" id="PF00293">
    <property type="entry name" value="NUDIX"/>
    <property type="match status" value="1"/>
</dbReference>
<dbReference type="SUPFAM" id="SSF55811">
    <property type="entry name" value="Nudix"/>
    <property type="match status" value="1"/>
</dbReference>
<dbReference type="PROSITE" id="PS51462">
    <property type="entry name" value="NUDIX"/>
    <property type="match status" value="1"/>
</dbReference>
<dbReference type="PROSITE" id="PS00893">
    <property type="entry name" value="NUDIX_BOX"/>
    <property type="match status" value="1"/>
</dbReference>
<protein>
    <recommendedName>
        <fullName>Nudix hydrolase 16, mitochondrial</fullName>
        <shortName>AtNUDT16</shortName>
        <ecNumber>3.6.1.-</ecNumber>
    </recommendedName>
</protein>
<sequence length="180" mass="20392">MCDLVARTGRLQQRYEDGSRLVAGCIPFRYVNSDKDGNSESGKVIQVLMISSSSGPGLLFPKGGWENDETVREAAAREAVEEAGVRGILMDFLGNYEFKSKSHQDEFSPEGLCKAAMYALYVKEELATWPEHETRTRKWLTIEEAVESCRHPWMKDALVEGFCKWHKEKMVKGEEITGEH</sequence>
<reference key="1">
    <citation type="journal article" date="2000" name="DNA Res.">
        <title>Structural analysis of Arabidopsis thaliana chromosome 3. II. Sequence features of the 4,251,695 bp regions covered by 90 P1, TAC and BAC clones.</title>
        <authorList>
            <person name="Kaneko T."/>
            <person name="Katoh T."/>
            <person name="Sato S."/>
            <person name="Nakamura Y."/>
            <person name="Asamizu E."/>
            <person name="Tabata S."/>
        </authorList>
    </citation>
    <scope>NUCLEOTIDE SEQUENCE [LARGE SCALE GENOMIC DNA]</scope>
    <source>
        <strain>cv. Columbia</strain>
    </source>
</reference>
<reference key="2">
    <citation type="journal article" date="2000" name="Nature">
        <title>Sequence and analysis of chromosome 3 of the plant Arabidopsis thaliana.</title>
        <authorList>
            <person name="Salanoubat M."/>
            <person name="Lemcke K."/>
            <person name="Rieger M."/>
            <person name="Ansorge W."/>
            <person name="Unseld M."/>
            <person name="Fartmann B."/>
            <person name="Valle G."/>
            <person name="Bloecker H."/>
            <person name="Perez-Alonso M."/>
            <person name="Obermaier B."/>
            <person name="Delseny M."/>
            <person name="Boutry M."/>
            <person name="Grivell L.A."/>
            <person name="Mache R."/>
            <person name="Puigdomenech P."/>
            <person name="De Simone V."/>
            <person name="Choisne N."/>
            <person name="Artiguenave F."/>
            <person name="Robert C."/>
            <person name="Brottier P."/>
            <person name="Wincker P."/>
            <person name="Cattolico L."/>
            <person name="Weissenbach J."/>
            <person name="Saurin W."/>
            <person name="Quetier F."/>
            <person name="Schaefer M."/>
            <person name="Mueller-Auer S."/>
            <person name="Gabel C."/>
            <person name="Fuchs M."/>
            <person name="Benes V."/>
            <person name="Wurmbach E."/>
            <person name="Drzonek H."/>
            <person name="Erfle H."/>
            <person name="Jordan N."/>
            <person name="Bangert S."/>
            <person name="Wiedelmann R."/>
            <person name="Kranz H."/>
            <person name="Voss H."/>
            <person name="Holland R."/>
            <person name="Brandt P."/>
            <person name="Nyakatura G."/>
            <person name="Vezzi A."/>
            <person name="D'Angelo M."/>
            <person name="Pallavicini A."/>
            <person name="Toppo S."/>
            <person name="Simionati B."/>
            <person name="Conrad A."/>
            <person name="Hornischer K."/>
            <person name="Kauer G."/>
            <person name="Loehnert T.-H."/>
            <person name="Nordsiek G."/>
            <person name="Reichelt J."/>
            <person name="Scharfe M."/>
            <person name="Schoen O."/>
            <person name="Bargues M."/>
            <person name="Terol J."/>
            <person name="Climent J."/>
            <person name="Navarro P."/>
            <person name="Collado C."/>
            <person name="Perez-Perez A."/>
            <person name="Ottenwaelder B."/>
            <person name="Duchemin D."/>
            <person name="Cooke R."/>
            <person name="Laudie M."/>
            <person name="Berger-Llauro C."/>
            <person name="Purnelle B."/>
            <person name="Masuy D."/>
            <person name="de Haan M."/>
            <person name="Maarse A.C."/>
            <person name="Alcaraz J.-P."/>
            <person name="Cottet A."/>
            <person name="Casacuberta E."/>
            <person name="Monfort A."/>
            <person name="Argiriou A."/>
            <person name="Flores M."/>
            <person name="Liguori R."/>
            <person name="Vitale D."/>
            <person name="Mannhaupt G."/>
            <person name="Haase D."/>
            <person name="Schoof H."/>
            <person name="Rudd S."/>
            <person name="Zaccaria P."/>
            <person name="Mewes H.-W."/>
            <person name="Mayer K.F.X."/>
            <person name="Kaul S."/>
            <person name="Town C.D."/>
            <person name="Koo H.L."/>
            <person name="Tallon L.J."/>
            <person name="Jenkins J."/>
            <person name="Rooney T."/>
            <person name="Rizzo M."/>
            <person name="Walts A."/>
            <person name="Utterback T."/>
            <person name="Fujii C.Y."/>
            <person name="Shea T.P."/>
            <person name="Creasy T.H."/>
            <person name="Haas B."/>
            <person name="Maiti R."/>
            <person name="Wu D."/>
            <person name="Peterson J."/>
            <person name="Van Aken S."/>
            <person name="Pai G."/>
            <person name="Militscher J."/>
            <person name="Sellers P."/>
            <person name="Gill J.E."/>
            <person name="Feldblyum T.V."/>
            <person name="Preuss D."/>
            <person name="Lin X."/>
            <person name="Nierman W.C."/>
            <person name="Salzberg S.L."/>
            <person name="White O."/>
            <person name="Venter J.C."/>
            <person name="Fraser C.M."/>
            <person name="Kaneko T."/>
            <person name="Nakamura Y."/>
            <person name="Sato S."/>
            <person name="Kato T."/>
            <person name="Asamizu E."/>
            <person name="Sasamoto S."/>
            <person name="Kimura T."/>
            <person name="Idesawa K."/>
            <person name="Kawashima K."/>
            <person name="Kishida Y."/>
            <person name="Kiyokawa C."/>
            <person name="Kohara M."/>
            <person name="Matsumoto M."/>
            <person name="Matsuno A."/>
            <person name="Muraki A."/>
            <person name="Nakayama S."/>
            <person name="Nakazaki N."/>
            <person name="Shinpo S."/>
            <person name="Takeuchi C."/>
            <person name="Wada T."/>
            <person name="Watanabe A."/>
            <person name="Yamada M."/>
            <person name="Yasuda M."/>
            <person name="Tabata S."/>
        </authorList>
    </citation>
    <scope>NUCLEOTIDE SEQUENCE [LARGE SCALE GENOMIC DNA]</scope>
    <source>
        <strain>cv. Columbia</strain>
    </source>
</reference>
<reference key="3">
    <citation type="journal article" date="2017" name="Plant J.">
        <title>Araport11: a complete reannotation of the Arabidopsis thaliana reference genome.</title>
        <authorList>
            <person name="Cheng C.Y."/>
            <person name="Krishnakumar V."/>
            <person name="Chan A.P."/>
            <person name="Thibaud-Nissen F."/>
            <person name="Schobel S."/>
            <person name="Town C.D."/>
        </authorList>
    </citation>
    <scope>GENOME REANNOTATION</scope>
    <source>
        <strain>cv. Columbia</strain>
    </source>
</reference>
<reference key="4">
    <citation type="journal article" date="2003" name="Science">
        <title>Empirical analysis of transcriptional activity in the Arabidopsis genome.</title>
        <authorList>
            <person name="Yamada K."/>
            <person name="Lim J."/>
            <person name="Dale J.M."/>
            <person name="Chen H."/>
            <person name="Shinn P."/>
            <person name="Palm C.J."/>
            <person name="Southwick A.M."/>
            <person name="Wu H.C."/>
            <person name="Kim C.J."/>
            <person name="Nguyen M."/>
            <person name="Pham P.K."/>
            <person name="Cheuk R.F."/>
            <person name="Karlin-Newmann G."/>
            <person name="Liu S.X."/>
            <person name="Lam B."/>
            <person name="Sakano H."/>
            <person name="Wu T."/>
            <person name="Yu G."/>
            <person name="Miranda M."/>
            <person name="Quach H.L."/>
            <person name="Tripp M."/>
            <person name="Chang C.H."/>
            <person name="Lee J.M."/>
            <person name="Toriumi M.J."/>
            <person name="Chan M.M."/>
            <person name="Tang C.C."/>
            <person name="Onodera C.S."/>
            <person name="Deng J.M."/>
            <person name="Akiyama K."/>
            <person name="Ansari Y."/>
            <person name="Arakawa T."/>
            <person name="Banh J."/>
            <person name="Banno F."/>
            <person name="Bowser L."/>
            <person name="Brooks S.Y."/>
            <person name="Carninci P."/>
            <person name="Chao Q."/>
            <person name="Choy N."/>
            <person name="Enju A."/>
            <person name="Goldsmith A.D."/>
            <person name="Gurjal M."/>
            <person name="Hansen N.F."/>
            <person name="Hayashizaki Y."/>
            <person name="Johnson-Hopson C."/>
            <person name="Hsuan V.W."/>
            <person name="Iida K."/>
            <person name="Karnes M."/>
            <person name="Khan S."/>
            <person name="Koesema E."/>
            <person name="Ishida J."/>
            <person name="Jiang P.X."/>
            <person name="Jones T."/>
            <person name="Kawai J."/>
            <person name="Kamiya A."/>
            <person name="Meyers C."/>
            <person name="Nakajima M."/>
            <person name="Narusaka M."/>
            <person name="Seki M."/>
            <person name="Sakurai T."/>
            <person name="Satou M."/>
            <person name="Tamse R."/>
            <person name="Vaysberg M."/>
            <person name="Wallender E.K."/>
            <person name="Wong C."/>
            <person name="Yamamura Y."/>
            <person name="Yuan S."/>
            <person name="Shinozaki K."/>
            <person name="Davis R.W."/>
            <person name="Theologis A."/>
            <person name="Ecker J.R."/>
        </authorList>
    </citation>
    <scope>NUCLEOTIDE SEQUENCE [LARGE SCALE MRNA] (ISOFORM 1)</scope>
    <source>
        <strain>cv. Columbia</strain>
    </source>
</reference>
<reference key="5">
    <citation type="journal article" date="2005" name="J. Biol. Chem.">
        <title>Comprehensive analysis of cytosolic nudix hydrolases in Arabidopsis thaliana.</title>
        <authorList>
            <person name="Ogawa T."/>
            <person name="Ueda Y."/>
            <person name="Yoshimura K."/>
            <person name="Shigeoka S."/>
        </authorList>
    </citation>
    <scope>NOMENCLATURE</scope>
</reference>
<reference key="6">
    <citation type="journal article" date="2008" name="Plant Physiol.">
        <title>Molecular characterization of organelle-type Nudix hydrolases in Arabidopsis.</title>
        <authorList>
            <person name="Ogawa T."/>
            <person name="Yoshimura K."/>
            <person name="Miyake H."/>
            <person name="Ishikawa K."/>
            <person name="Ito D."/>
            <person name="Tanabe N."/>
            <person name="Shigeoka S."/>
        </authorList>
    </citation>
    <scope>TISSUE SPECIFICITY</scope>
</reference>
<organism>
    <name type="scientific">Arabidopsis thaliana</name>
    <name type="common">Mouse-ear cress</name>
    <dbReference type="NCBI Taxonomy" id="3702"/>
    <lineage>
        <taxon>Eukaryota</taxon>
        <taxon>Viridiplantae</taxon>
        <taxon>Streptophyta</taxon>
        <taxon>Embryophyta</taxon>
        <taxon>Tracheophyta</taxon>
        <taxon>Spermatophyta</taxon>
        <taxon>Magnoliopsida</taxon>
        <taxon>eudicotyledons</taxon>
        <taxon>Gunneridae</taxon>
        <taxon>Pentapetalae</taxon>
        <taxon>rosids</taxon>
        <taxon>malvids</taxon>
        <taxon>Brassicales</taxon>
        <taxon>Brassicaceae</taxon>
        <taxon>Camelineae</taxon>
        <taxon>Arabidopsis</taxon>
    </lineage>
</organism>